<proteinExistence type="inferred from homology"/>
<protein>
    <recommendedName>
        <fullName evidence="1">Small ribosomal subunit protein uS5</fullName>
    </recommendedName>
    <alternativeName>
        <fullName evidence="2">30S ribosomal protein S5</fullName>
    </alternativeName>
</protein>
<sequence length="172" mass="18228">MAKMQTKMQNEERDDGLREKMIAVNRVTKVVKGGRILGFAALTVVGDGDGRIGMGKGKSKEVPVAVQKAMDEARRKMIKVTLRKGTLQHTVTGQHGASRVLISPAKDGTGIIAGGPMRAIFDVMGVTNVVAKSLGSTNPYNLVRATIDGLSKMSTPAEIAAKRGKSVEEILG</sequence>
<evidence type="ECO:0000255" key="1">
    <source>
        <dbReference type="HAMAP-Rule" id="MF_01307"/>
    </source>
</evidence>
<evidence type="ECO:0000305" key="2"/>
<gene>
    <name evidence="1" type="primary">rpsE</name>
    <name type="ordered locus">Pnuc_0070</name>
</gene>
<keyword id="KW-1185">Reference proteome</keyword>
<keyword id="KW-0687">Ribonucleoprotein</keyword>
<keyword id="KW-0689">Ribosomal protein</keyword>
<keyword id="KW-0694">RNA-binding</keyword>
<keyword id="KW-0699">rRNA-binding</keyword>
<feature type="chain" id="PRO_1000140880" description="Small ribosomal subunit protein uS5">
    <location>
        <begin position="1"/>
        <end position="172"/>
    </location>
</feature>
<feature type="domain" description="S5 DRBM" evidence="1">
    <location>
        <begin position="17"/>
        <end position="80"/>
    </location>
</feature>
<reference key="1">
    <citation type="journal article" date="2012" name="Stand. Genomic Sci.">
        <title>Complete genome sequence of Polynucleobacter necessarius subsp. asymbioticus type strain (QLW-P1DMWA-1(T)).</title>
        <authorList>
            <person name="Meincke L."/>
            <person name="Copeland A."/>
            <person name="Lapidus A."/>
            <person name="Lucas S."/>
            <person name="Berry K.W."/>
            <person name="Del Rio T.G."/>
            <person name="Hammon N."/>
            <person name="Dalin E."/>
            <person name="Tice H."/>
            <person name="Pitluck S."/>
            <person name="Richardson P."/>
            <person name="Bruce D."/>
            <person name="Goodwin L."/>
            <person name="Han C."/>
            <person name="Tapia R."/>
            <person name="Detter J.C."/>
            <person name="Schmutz J."/>
            <person name="Brettin T."/>
            <person name="Larimer F."/>
            <person name="Land M."/>
            <person name="Hauser L."/>
            <person name="Kyrpides N.C."/>
            <person name="Ivanova N."/>
            <person name="Goker M."/>
            <person name="Woyke T."/>
            <person name="Wu Q.L."/>
            <person name="Pockl M."/>
            <person name="Hahn M.W."/>
            <person name="Klenk H.P."/>
        </authorList>
    </citation>
    <scope>NUCLEOTIDE SEQUENCE [LARGE SCALE GENOMIC DNA]</scope>
    <source>
        <strain>DSM 18221 / CIP 109841 / QLW-P1DMWA-1</strain>
    </source>
</reference>
<organism>
    <name type="scientific">Polynucleobacter asymbioticus (strain DSM 18221 / CIP 109841 / QLW-P1DMWA-1)</name>
    <name type="common">Polynucleobacter necessarius subsp. asymbioticus</name>
    <dbReference type="NCBI Taxonomy" id="312153"/>
    <lineage>
        <taxon>Bacteria</taxon>
        <taxon>Pseudomonadati</taxon>
        <taxon>Pseudomonadota</taxon>
        <taxon>Betaproteobacteria</taxon>
        <taxon>Burkholderiales</taxon>
        <taxon>Burkholderiaceae</taxon>
        <taxon>Polynucleobacter</taxon>
    </lineage>
</organism>
<name>RS5_POLAQ</name>
<dbReference type="EMBL" id="CP000655">
    <property type="protein sequence ID" value="ABP33292.1"/>
    <property type="molecule type" value="Genomic_DNA"/>
</dbReference>
<dbReference type="RefSeq" id="WP_011901917.1">
    <property type="nucleotide sequence ID" value="NC_009379.1"/>
</dbReference>
<dbReference type="SMR" id="A4SUX8"/>
<dbReference type="GeneID" id="31480416"/>
<dbReference type="KEGG" id="pnu:Pnuc_0070"/>
<dbReference type="eggNOG" id="COG0098">
    <property type="taxonomic scope" value="Bacteria"/>
</dbReference>
<dbReference type="HOGENOM" id="CLU_065898_2_2_4"/>
<dbReference type="Proteomes" id="UP000000231">
    <property type="component" value="Chromosome"/>
</dbReference>
<dbReference type="GO" id="GO:0015935">
    <property type="term" value="C:small ribosomal subunit"/>
    <property type="evidence" value="ECO:0007669"/>
    <property type="project" value="InterPro"/>
</dbReference>
<dbReference type="GO" id="GO:0019843">
    <property type="term" value="F:rRNA binding"/>
    <property type="evidence" value="ECO:0007669"/>
    <property type="project" value="UniProtKB-UniRule"/>
</dbReference>
<dbReference type="GO" id="GO:0003735">
    <property type="term" value="F:structural constituent of ribosome"/>
    <property type="evidence" value="ECO:0007669"/>
    <property type="project" value="InterPro"/>
</dbReference>
<dbReference type="GO" id="GO:0006412">
    <property type="term" value="P:translation"/>
    <property type="evidence" value="ECO:0007669"/>
    <property type="project" value="UniProtKB-UniRule"/>
</dbReference>
<dbReference type="FunFam" id="3.30.160.20:FF:000001">
    <property type="entry name" value="30S ribosomal protein S5"/>
    <property type="match status" value="1"/>
</dbReference>
<dbReference type="FunFam" id="3.30.230.10:FF:000002">
    <property type="entry name" value="30S ribosomal protein S5"/>
    <property type="match status" value="1"/>
</dbReference>
<dbReference type="Gene3D" id="3.30.160.20">
    <property type="match status" value="1"/>
</dbReference>
<dbReference type="Gene3D" id="3.30.230.10">
    <property type="match status" value="1"/>
</dbReference>
<dbReference type="HAMAP" id="MF_01307_B">
    <property type="entry name" value="Ribosomal_uS5_B"/>
    <property type="match status" value="1"/>
</dbReference>
<dbReference type="InterPro" id="IPR020568">
    <property type="entry name" value="Ribosomal_Su5_D2-typ_SF"/>
</dbReference>
<dbReference type="InterPro" id="IPR000851">
    <property type="entry name" value="Ribosomal_uS5"/>
</dbReference>
<dbReference type="InterPro" id="IPR005712">
    <property type="entry name" value="Ribosomal_uS5_bac-type"/>
</dbReference>
<dbReference type="InterPro" id="IPR005324">
    <property type="entry name" value="Ribosomal_uS5_C"/>
</dbReference>
<dbReference type="InterPro" id="IPR013810">
    <property type="entry name" value="Ribosomal_uS5_N"/>
</dbReference>
<dbReference type="InterPro" id="IPR018192">
    <property type="entry name" value="Ribosomal_uS5_N_CS"/>
</dbReference>
<dbReference type="InterPro" id="IPR014721">
    <property type="entry name" value="Ribsml_uS5_D2-typ_fold_subgr"/>
</dbReference>
<dbReference type="NCBIfam" id="TIGR01021">
    <property type="entry name" value="rpsE_bact"/>
    <property type="match status" value="1"/>
</dbReference>
<dbReference type="PANTHER" id="PTHR48277">
    <property type="entry name" value="MITOCHONDRIAL RIBOSOMAL PROTEIN S5"/>
    <property type="match status" value="1"/>
</dbReference>
<dbReference type="PANTHER" id="PTHR48277:SF1">
    <property type="entry name" value="MITOCHONDRIAL RIBOSOMAL PROTEIN S5"/>
    <property type="match status" value="1"/>
</dbReference>
<dbReference type="Pfam" id="PF00333">
    <property type="entry name" value="Ribosomal_S5"/>
    <property type="match status" value="1"/>
</dbReference>
<dbReference type="Pfam" id="PF03719">
    <property type="entry name" value="Ribosomal_S5_C"/>
    <property type="match status" value="1"/>
</dbReference>
<dbReference type="SUPFAM" id="SSF54768">
    <property type="entry name" value="dsRNA-binding domain-like"/>
    <property type="match status" value="1"/>
</dbReference>
<dbReference type="SUPFAM" id="SSF54211">
    <property type="entry name" value="Ribosomal protein S5 domain 2-like"/>
    <property type="match status" value="1"/>
</dbReference>
<dbReference type="PROSITE" id="PS00585">
    <property type="entry name" value="RIBOSOMAL_S5"/>
    <property type="match status" value="1"/>
</dbReference>
<dbReference type="PROSITE" id="PS50881">
    <property type="entry name" value="S5_DSRBD"/>
    <property type="match status" value="1"/>
</dbReference>
<comment type="function">
    <text evidence="1">With S4 and S12 plays an important role in translational accuracy.</text>
</comment>
<comment type="function">
    <text evidence="1">Located at the back of the 30S subunit body where it stabilizes the conformation of the head with respect to the body.</text>
</comment>
<comment type="subunit">
    <text evidence="1">Part of the 30S ribosomal subunit. Contacts proteins S4 and S8.</text>
</comment>
<comment type="domain">
    <text>The N-terminal domain interacts with the head of the 30S subunit; the C-terminal domain interacts with the body and contacts protein S4. The interaction surface between S4 and S5 is involved in control of translational fidelity.</text>
</comment>
<comment type="similarity">
    <text evidence="1">Belongs to the universal ribosomal protein uS5 family.</text>
</comment>
<accession>A4SUX8</accession>